<feature type="chain" id="PRO_0000379448" description="Male-specific protein scotti">
    <location>
        <begin position="1"/>
        <end position="147"/>
    </location>
</feature>
<feature type="region of interest" description="Disordered" evidence="3">
    <location>
        <begin position="57"/>
        <end position="76"/>
    </location>
</feature>
<feature type="glycosylation site" description="N-linked (GlcNAc...) asparagine" evidence="2">
    <location>
        <position position="128"/>
    </location>
</feature>
<organism>
    <name type="scientific">Drosophila simulans</name>
    <name type="common">Fruit fly</name>
    <dbReference type="NCBI Taxonomy" id="7240"/>
    <lineage>
        <taxon>Eukaryota</taxon>
        <taxon>Metazoa</taxon>
        <taxon>Ecdysozoa</taxon>
        <taxon>Arthropoda</taxon>
        <taxon>Hexapoda</taxon>
        <taxon>Insecta</taxon>
        <taxon>Pterygota</taxon>
        <taxon>Neoptera</taxon>
        <taxon>Endopterygota</taxon>
        <taxon>Diptera</taxon>
        <taxon>Brachycera</taxon>
        <taxon>Muscomorpha</taxon>
        <taxon>Ephydroidea</taxon>
        <taxon>Drosophilidae</taxon>
        <taxon>Drosophila</taxon>
        <taxon>Sophophora</taxon>
    </lineage>
</organism>
<gene>
    <name evidence="1" type="primary">soti</name>
    <name type="ORF">GD20424</name>
</gene>
<reference evidence="5" key="1">
    <citation type="journal article" date="2007" name="Nature">
        <title>Evolution of genes and genomes on the Drosophila phylogeny.</title>
        <authorList>
            <consortium name="Drosophila 12 genomes consortium"/>
        </authorList>
    </citation>
    <scope>NUCLEOTIDE SEQUENCE [LARGE SCALE GENOMIC DNA]</scope>
</reference>
<comment type="function">
    <text evidence="1">Post-meiotically transcribed gene that has a role in late spermiogenesis; required for actin cone progression during spermatid individualization.</text>
</comment>
<comment type="similarity">
    <text evidence="4">Belongs to the male-specific scotti family.</text>
</comment>
<proteinExistence type="inferred from homology"/>
<sequence length="147" mass="16580">MDVLHAHDLYGEQLIDRVGDAVNEDAGDDLDTLVEGQQQQRLGVYRQMDILLDAPQEPPLGVFPAQGGPNGPPRLRKKRSFYTMTKPTPPCQSQEPEMCVLMASVTRAMRHVREDQRGEYFANYLVENMTSQNYPNGVGLPQHWGQL</sequence>
<dbReference type="EMBL" id="CM000364">
    <property type="protein sequence ID" value="EDX12953.1"/>
    <property type="molecule type" value="Genomic_DNA"/>
</dbReference>
<dbReference type="SMR" id="B4QZV5"/>
<dbReference type="STRING" id="7240.B4QZV5"/>
<dbReference type="GlyCosmos" id="B4QZV5">
    <property type="glycosylation" value="1 site, No reported glycans"/>
</dbReference>
<dbReference type="EnsemblMetazoa" id="FBtr0220334">
    <property type="protein sequence ID" value="FBpp0218826"/>
    <property type="gene ID" value="FBgn0191896"/>
</dbReference>
<dbReference type="EnsemblMetazoa" id="XM_002103414.4">
    <property type="protein sequence ID" value="XP_002103450.1"/>
    <property type="gene ID" value="LOC6728098"/>
</dbReference>
<dbReference type="GeneID" id="6728098"/>
<dbReference type="KEGG" id="dsi:Dsimw501_GD20424"/>
<dbReference type="HOGENOM" id="CLU_120156_0_0_1"/>
<dbReference type="OMA" id="LPQRWGQ"/>
<dbReference type="OrthoDB" id="7867455at2759"/>
<dbReference type="PhylomeDB" id="B4QZV5"/>
<dbReference type="Proteomes" id="UP000000304">
    <property type="component" value="Chromosome 3R"/>
</dbReference>
<dbReference type="Bgee" id="FBgn0191896">
    <property type="expression patterns" value="Expressed in male reproductive system and 2 other cell types or tissues"/>
</dbReference>
<dbReference type="GO" id="GO:0007291">
    <property type="term" value="P:sperm individualization"/>
    <property type="evidence" value="ECO:0000250"/>
    <property type="project" value="UniProtKB"/>
</dbReference>
<dbReference type="InterPro" id="IPR031397">
    <property type="entry name" value="Soti"/>
</dbReference>
<dbReference type="Pfam" id="PF17079">
    <property type="entry name" value="SOTI"/>
    <property type="match status" value="1"/>
</dbReference>
<protein>
    <recommendedName>
        <fullName evidence="1">Male-specific protein scotti</fullName>
    </recommendedName>
</protein>
<keyword id="KW-0217">Developmental protein</keyword>
<keyword id="KW-0221">Differentiation</keyword>
<keyword id="KW-0325">Glycoprotein</keyword>
<keyword id="KW-1185">Reference proteome</keyword>
<keyword id="KW-0744">Spermatogenesis</keyword>
<name>SOTI_DROSI</name>
<accession>B4QZV5</accession>
<evidence type="ECO:0000250" key="1">
    <source>
        <dbReference type="UniProtKB" id="Q9VFK3"/>
    </source>
</evidence>
<evidence type="ECO:0000255" key="2"/>
<evidence type="ECO:0000256" key="3">
    <source>
        <dbReference type="SAM" id="MobiDB-lite"/>
    </source>
</evidence>
<evidence type="ECO:0000305" key="4"/>
<evidence type="ECO:0000312" key="5">
    <source>
        <dbReference type="EMBL" id="EDX12953.1"/>
    </source>
</evidence>